<evidence type="ECO:0000255" key="1">
    <source>
        <dbReference type="HAMAP-Rule" id="MF_00211"/>
    </source>
</evidence>
<proteinExistence type="inferred from homology"/>
<feature type="chain" id="PRO_1000198794" description="Anthranilate phosphoribosyltransferase">
    <location>
        <begin position="1"/>
        <end position="338"/>
    </location>
</feature>
<feature type="binding site" evidence="1">
    <location>
        <position position="81"/>
    </location>
    <ligand>
        <name>5-phospho-alpha-D-ribose 1-diphosphate</name>
        <dbReference type="ChEBI" id="CHEBI:58017"/>
    </ligand>
</feature>
<feature type="binding site" evidence="1">
    <location>
        <position position="81"/>
    </location>
    <ligand>
        <name>anthranilate</name>
        <dbReference type="ChEBI" id="CHEBI:16567"/>
        <label>1</label>
    </ligand>
</feature>
<feature type="binding site" evidence="1">
    <location>
        <begin position="84"/>
        <end position="85"/>
    </location>
    <ligand>
        <name>5-phospho-alpha-D-ribose 1-diphosphate</name>
        <dbReference type="ChEBI" id="CHEBI:58017"/>
    </ligand>
</feature>
<feature type="binding site" evidence="1">
    <location>
        <position position="89"/>
    </location>
    <ligand>
        <name>5-phospho-alpha-D-ribose 1-diphosphate</name>
        <dbReference type="ChEBI" id="CHEBI:58017"/>
    </ligand>
</feature>
<feature type="binding site" evidence="1">
    <location>
        <begin position="91"/>
        <end position="94"/>
    </location>
    <ligand>
        <name>5-phospho-alpha-D-ribose 1-diphosphate</name>
        <dbReference type="ChEBI" id="CHEBI:58017"/>
    </ligand>
</feature>
<feature type="binding site" evidence="1">
    <location>
        <position position="93"/>
    </location>
    <ligand>
        <name>Mg(2+)</name>
        <dbReference type="ChEBI" id="CHEBI:18420"/>
        <label>1</label>
    </ligand>
</feature>
<feature type="binding site" evidence="1">
    <location>
        <begin position="109"/>
        <end position="117"/>
    </location>
    <ligand>
        <name>5-phospho-alpha-D-ribose 1-diphosphate</name>
        <dbReference type="ChEBI" id="CHEBI:58017"/>
    </ligand>
</feature>
<feature type="binding site" evidence="1">
    <location>
        <position position="112"/>
    </location>
    <ligand>
        <name>anthranilate</name>
        <dbReference type="ChEBI" id="CHEBI:16567"/>
        <label>1</label>
    </ligand>
</feature>
<feature type="binding site" evidence="1">
    <location>
        <position position="121"/>
    </location>
    <ligand>
        <name>5-phospho-alpha-D-ribose 1-diphosphate</name>
        <dbReference type="ChEBI" id="CHEBI:58017"/>
    </ligand>
</feature>
<feature type="binding site" evidence="1">
    <location>
        <position position="167"/>
    </location>
    <ligand>
        <name>anthranilate</name>
        <dbReference type="ChEBI" id="CHEBI:16567"/>
        <label>2</label>
    </ligand>
</feature>
<feature type="binding site" evidence="1">
    <location>
        <position position="226"/>
    </location>
    <ligand>
        <name>Mg(2+)</name>
        <dbReference type="ChEBI" id="CHEBI:18420"/>
        <label>2</label>
    </ligand>
</feature>
<feature type="binding site" evidence="1">
    <location>
        <position position="227"/>
    </location>
    <ligand>
        <name>Mg(2+)</name>
        <dbReference type="ChEBI" id="CHEBI:18420"/>
        <label>1</label>
    </ligand>
</feature>
<feature type="binding site" evidence="1">
    <location>
        <position position="227"/>
    </location>
    <ligand>
        <name>Mg(2+)</name>
        <dbReference type="ChEBI" id="CHEBI:18420"/>
        <label>2</label>
    </ligand>
</feature>
<comment type="function">
    <text evidence="1">Catalyzes the transfer of the phosphoribosyl group of 5-phosphorylribose-1-pyrophosphate (PRPP) to anthranilate to yield N-(5'-phosphoribosyl)-anthranilate (PRA).</text>
</comment>
<comment type="catalytic activity">
    <reaction evidence="1">
        <text>N-(5-phospho-beta-D-ribosyl)anthranilate + diphosphate = 5-phospho-alpha-D-ribose 1-diphosphate + anthranilate</text>
        <dbReference type="Rhea" id="RHEA:11768"/>
        <dbReference type="ChEBI" id="CHEBI:16567"/>
        <dbReference type="ChEBI" id="CHEBI:18277"/>
        <dbReference type="ChEBI" id="CHEBI:33019"/>
        <dbReference type="ChEBI" id="CHEBI:58017"/>
        <dbReference type="EC" id="2.4.2.18"/>
    </reaction>
</comment>
<comment type="cofactor">
    <cofactor evidence="1">
        <name>Mg(2+)</name>
        <dbReference type="ChEBI" id="CHEBI:18420"/>
    </cofactor>
    <text evidence="1">Binds 2 magnesium ions per monomer.</text>
</comment>
<comment type="pathway">
    <text evidence="1">Amino-acid biosynthesis; L-tryptophan biosynthesis; L-tryptophan from chorismate: step 2/5.</text>
</comment>
<comment type="subunit">
    <text evidence="1">Homodimer.</text>
</comment>
<comment type="similarity">
    <text evidence="1">Belongs to the anthranilate phosphoribosyltransferase family.</text>
</comment>
<keyword id="KW-0028">Amino-acid biosynthesis</keyword>
<keyword id="KW-0057">Aromatic amino acid biosynthesis</keyword>
<keyword id="KW-0328">Glycosyltransferase</keyword>
<keyword id="KW-0460">Magnesium</keyword>
<keyword id="KW-0479">Metal-binding</keyword>
<keyword id="KW-1185">Reference proteome</keyword>
<keyword id="KW-0808">Transferase</keyword>
<keyword id="KW-0822">Tryptophan biosynthesis</keyword>
<sequence>MIVRDILEQIVAGQDLSRKETETVFAAIMAGAWTPAQIGALLMGLRMKGQRVEELVGATQALRACMTRVEVSTDHLLDTCGTGGDALSTFNISTVSAVVAAAGGARVAKHGNRSMVSRSGSADVLEAAGLRMDMSPAEVADSIERIGIGFLFAPAHHGAMRYAVGPRKELAIRSLFNLMGPLSNPAGAPHQVLGVYAERWLIPMAEAARELGSRHVLVVHGHDGLDEISLSGPSDIAELKDGMISRSRIQPEDFGLSSAPLATLQIDSVAAALAAAEEVLQNRPGPRRDVVLLNAGAALYAADVVPDMAVGVVVARAVLKSGAAWDKWQALLGRTSQG</sequence>
<gene>
    <name evidence="1" type="primary">trpD</name>
    <name type="ordered locus">AFE_3243</name>
</gene>
<protein>
    <recommendedName>
        <fullName evidence="1">Anthranilate phosphoribosyltransferase</fullName>
        <ecNumber evidence="1">2.4.2.18</ecNumber>
    </recommendedName>
</protein>
<reference key="1">
    <citation type="journal article" date="2008" name="BMC Genomics">
        <title>Acidithiobacillus ferrooxidans metabolism: from genome sequence to industrial applications.</title>
        <authorList>
            <person name="Valdes J."/>
            <person name="Pedroso I."/>
            <person name="Quatrini R."/>
            <person name="Dodson R.J."/>
            <person name="Tettelin H."/>
            <person name="Blake R. II"/>
            <person name="Eisen J.A."/>
            <person name="Holmes D.S."/>
        </authorList>
    </citation>
    <scope>NUCLEOTIDE SEQUENCE [LARGE SCALE GENOMIC DNA]</scope>
    <source>
        <strain>ATCC 23270 / DSM 14882 / CIP 104768 / NCIMB 8455</strain>
    </source>
</reference>
<name>TRPD_ACIF2</name>
<accession>B7JBC1</accession>
<dbReference type="EC" id="2.4.2.18" evidence="1"/>
<dbReference type="EMBL" id="CP001219">
    <property type="protein sequence ID" value="ACK80216.1"/>
    <property type="molecule type" value="Genomic_DNA"/>
</dbReference>
<dbReference type="RefSeq" id="WP_012537673.1">
    <property type="nucleotide sequence ID" value="NC_011761.1"/>
</dbReference>
<dbReference type="SMR" id="B7JBC1"/>
<dbReference type="STRING" id="243159.AFE_3243"/>
<dbReference type="PaxDb" id="243159-AFE_3243"/>
<dbReference type="GeneID" id="65282223"/>
<dbReference type="KEGG" id="afr:AFE_3243"/>
<dbReference type="eggNOG" id="COG0547">
    <property type="taxonomic scope" value="Bacteria"/>
</dbReference>
<dbReference type="HOGENOM" id="CLU_034315_2_1_6"/>
<dbReference type="UniPathway" id="UPA00035">
    <property type="reaction ID" value="UER00041"/>
</dbReference>
<dbReference type="Proteomes" id="UP000001362">
    <property type="component" value="Chromosome"/>
</dbReference>
<dbReference type="GO" id="GO:0005829">
    <property type="term" value="C:cytosol"/>
    <property type="evidence" value="ECO:0007669"/>
    <property type="project" value="TreeGrafter"/>
</dbReference>
<dbReference type="GO" id="GO:0004048">
    <property type="term" value="F:anthranilate phosphoribosyltransferase activity"/>
    <property type="evidence" value="ECO:0007669"/>
    <property type="project" value="UniProtKB-UniRule"/>
</dbReference>
<dbReference type="GO" id="GO:0000287">
    <property type="term" value="F:magnesium ion binding"/>
    <property type="evidence" value="ECO:0007669"/>
    <property type="project" value="UniProtKB-UniRule"/>
</dbReference>
<dbReference type="GO" id="GO:0000162">
    <property type="term" value="P:L-tryptophan biosynthetic process"/>
    <property type="evidence" value="ECO:0007669"/>
    <property type="project" value="UniProtKB-UniRule"/>
</dbReference>
<dbReference type="FunFam" id="3.40.1030.10:FF:000002">
    <property type="entry name" value="Anthranilate phosphoribosyltransferase"/>
    <property type="match status" value="1"/>
</dbReference>
<dbReference type="Gene3D" id="3.40.1030.10">
    <property type="entry name" value="Nucleoside phosphorylase/phosphoribosyltransferase catalytic domain"/>
    <property type="match status" value="1"/>
</dbReference>
<dbReference type="Gene3D" id="1.20.970.10">
    <property type="entry name" value="Transferase, Pyrimidine Nucleoside Phosphorylase, Chain C"/>
    <property type="match status" value="1"/>
</dbReference>
<dbReference type="HAMAP" id="MF_00211">
    <property type="entry name" value="TrpD"/>
    <property type="match status" value="1"/>
</dbReference>
<dbReference type="InterPro" id="IPR005940">
    <property type="entry name" value="Anthranilate_Pribosyl_Tfrase"/>
</dbReference>
<dbReference type="InterPro" id="IPR000312">
    <property type="entry name" value="Glycosyl_Trfase_fam3"/>
</dbReference>
<dbReference type="InterPro" id="IPR017459">
    <property type="entry name" value="Glycosyl_Trfase_fam3_N_dom"/>
</dbReference>
<dbReference type="InterPro" id="IPR036320">
    <property type="entry name" value="Glycosyl_Trfase_fam3_N_dom_sf"/>
</dbReference>
<dbReference type="InterPro" id="IPR035902">
    <property type="entry name" value="Nuc_phospho_transferase"/>
</dbReference>
<dbReference type="NCBIfam" id="TIGR01245">
    <property type="entry name" value="trpD"/>
    <property type="match status" value="1"/>
</dbReference>
<dbReference type="PANTHER" id="PTHR43285">
    <property type="entry name" value="ANTHRANILATE PHOSPHORIBOSYLTRANSFERASE"/>
    <property type="match status" value="1"/>
</dbReference>
<dbReference type="PANTHER" id="PTHR43285:SF2">
    <property type="entry name" value="ANTHRANILATE PHOSPHORIBOSYLTRANSFERASE"/>
    <property type="match status" value="1"/>
</dbReference>
<dbReference type="Pfam" id="PF02885">
    <property type="entry name" value="Glycos_trans_3N"/>
    <property type="match status" value="1"/>
</dbReference>
<dbReference type="Pfam" id="PF00591">
    <property type="entry name" value="Glycos_transf_3"/>
    <property type="match status" value="1"/>
</dbReference>
<dbReference type="SUPFAM" id="SSF52418">
    <property type="entry name" value="Nucleoside phosphorylase/phosphoribosyltransferase catalytic domain"/>
    <property type="match status" value="1"/>
</dbReference>
<dbReference type="SUPFAM" id="SSF47648">
    <property type="entry name" value="Nucleoside phosphorylase/phosphoribosyltransferase N-terminal domain"/>
    <property type="match status" value="1"/>
</dbReference>
<organism>
    <name type="scientific">Acidithiobacillus ferrooxidans (strain ATCC 23270 / DSM 14882 / CIP 104768 / NCIMB 8455)</name>
    <name type="common">Ferrobacillus ferrooxidans (strain ATCC 23270)</name>
    <dbReference type="NCBI Taxonomy" id="243159"/>
    <lineage>
        <taxon>Bacteria</taxon>
        <taxon>Pseudomonadati</taxon>
        <taxon>Pseudomonadota</taxon>
        <taxon>Acidithiobacillia</taxon>
        <taxon>Acidithiobacillales</taxon>
        <taxon>Acidithiobacillaceae</taxon>
        <taxon>Acidithiobacillus</taxon>
    </lineage>
</organism>